<protein>
    <recommendedName>
        <fullName evidence="1">33 kDa chaperonin</fullName>
    </recommendedName>
    <alternativeName>
        <fullName evidence="1">Heat shock protein 33 homolog</fullName>
        <shortName evidence="1">HSP33</shortName>
    </alternativeName>
</protein>
<comment type="function">
    <text evidence="1">Redox regulated molecular chaperone. Protects both thermally unfolding and oxidatively damaged proteins from irreversible aggregation. Plays an important role in the bacterial defense system toward oxidative stress.</text>
</comment>
<comment type="subcellular location">
    <subcellularLocation>
        <location evidence="1">Cytoplasm</location>
    </subcellularLocation>
</comment>
<comment type="PTM">
    <text evidence="1">Under oxidizing conditions two disulfide bonds are formed involving the reactive cysteines. Under reducing conditions zinc is bound to the reactive cysteines and the protein is inactive.</text>
</comment>
<comment type="similarity">
    <text evidence="1">Belongs to the HSP33 family.</text>
</comment>
<sequence length="292" mass="32534">MPQHDQLHRYLFENFAVRGELVTVSETLQQILENHDYPQPVKNVLAELLVATSLLTATLKFDGDITVQLQGDGPMNLAVINGNNNQQMRGVARVQGEIPENADLKTLVGNGYVVITITPSEGERYQGVVGLEGDTLAACLEDYFMRSEQLPTRLFIRTGDVDGKPAAGGMLLQVMPAQNAQQDDFDHLATLTETIKTEELLTLPANEVLWRLYHEEEVTVYDPQDVEFKCTCSRERCADALKTLPDEEVDSILAEDGEIDMHCDYCGNHYLFNAMDIAEIRNNASPADPQVH</sequence>
<gene>
    <name evidence="1" type="primary">hslO</name>
    <name type="ordered locus">ECDH10B_3576</name>
</gene>
<name>HSLO_ECODH</name>
<feature type="chain" id="PRO_1000095016" description="33 kDa chaperonin">
    <location>
        <begin position="1"/>
        <end position="292"/>
    </location>
</feature>
<feature type="disulfide bond" description="Redox-active" evidence="1">
    <location>
        <begin position="230"/>
        <end position="232"/>
    </location>
</feature>
<feature type="disulfide bond" description="Redox-active" evidence="1">
    <location>
        <begin position="263"/>
        <end position="266"/>
    </location>
</feature>
<evidence type="ECO:0000255" key="1">
    <source>
        <dbReference type="HAMAP-Rule" id="MF_00117"/>
    </source>
</evidence>
<keyword id="KW-0143">Chaperone</keyword>
<keyword id="KW-0963">Cytoplasm</keyword>
<keyword id="KW-1015">Disulfide bond</keyword>
<keyword id="KW-0676">Redox-active center</keyword>
<keyword id="KW-0346">Stress response</keyword>
<keyword id="KW-0862">Zinc</keyword>
<proteinExistence type="inferred from homology"/>
<dbReference type="EMBL" id="CP000948">
    <property type="protein sequence ID" value="ACB04460.1"/>
    <property type="molecule type" value="Genomic_DNA"/>
</dbReference>
<dbReference type="RefSeq" id="WP_001135574.1">
    <property type="nucleotide sequence ID" value="NC_010473.1"/>
</dbReference>
<dbReference type="SMR" id="B1X748"/>
<dbReference type="GeneID" id="93778597"/>
<dbReference type="KEGG" id="ecd:ECDH10B_3576"/>
<dbReference type="HOGENOM" id="CLU_054493_0_0_6"/>
<dbReference type="GO" id="GO:0005737">
    <property type="term" value="C:cytoplasm"/>
    <property type="evidence" value="ECO:0007669"/>
    <property type="project" value="UniProtKB-SubCell"/>
</dbReference>
<dbReference type="GO" id="GO:0044183">
    <property type="term" value="F:protein folding chaperone"/>
    <property type="evidence" value="ECO:0007669"/>
    <property type="project" value="TreeGrafter"/>
</dbReference>
<dbReference type="GO" id="GO:0051082">
    <property type="term" value="F:unfolded protein binding"/>
    <property type="evidence" value="ECO:0007669"/>
    <property type="project" value="UniProtKB-UniRule"/>
</dbReference>
<dbReference type="GO" id="GO:0042026">
    <property type="term" value="P:protein refolding"/>
    <property type="evidence" value="ECO:0007669"/>
    <property type="project" value="TreeGrafter"/>
</dbReference>
<dbReference type="CDD" id="cd00498">
    <property type="entry name" value="Hsp33"/>
    <property type="match status" value="1"/>
</dbReference>
<dbReference type="FunFam" id="3.55.30.10:FF:000001">
    <property type="entry name" value="33 kDa chaperonin"/>
    <property type="match status" value="1"/>
</dbReference>
<dbReference type="Gene3D" id="1.10.287.480">
    <property type="entry name" value="helix hairpin bin"/>
    <property type="match status" value="1"/>
</dbReference>
<dbReference type="Gene3D" id="3.55.30.10">
    <property type="entry name" value="Hsp33 domain"/>
    <property type="match status" value="1"/>
</dbReference>
<dbReference type="Gene3D" id="3.90.1280.10">
    <property type="entry name" value="HSP33 redox switch-like"/>
    <property type="match status" value="1"/>
</dbReference>
<dbReference type="HAMAP" id="MF_00117">
    <property type="entry name" value="HslO"/>
    <property type="match status" value="1"/>
</dbReference>
<dbReference type="InterPro" id="IPR000397">
    <property type="entry name" value="Heat_shock_Hsp33"/>
</dbReference>
<dbReference type="InterPro" id="IPR016154">
    <property type="entry name" value="Heat_shock_Hsp33_C"/>
</dbReference>
<dbReference type="InterPro" id="IPR016153">
    <property type="entry name" value="Heat_shock_Hsp33_N"/>
</dbReference>
<dbReference type="InterPro" id="IPR023212">
    <property type="entry name" value="Hsp33_helix_hairpin_bin_dom_sf"/>
</dbReference>
<dbReference type="NCBIfam" id="NF001033">
    <property type="entry name" value="PRK00114.1"/>
    <property type="match status" value="1"/>
</dbReference>
<dbReference type="PANTHER" id="PTHR30111">
    <property type="entry name" value="33 KDA CHAPERONIN"/>
    <property type="match status" value="1"/>
</dbReference>
<dbReference type="PANTHER" id="PTHR30111:SF1">
    <property type="entry name" value="33 KDA CHAPERONIN"/>
    <property type="match status" value="1"/>
</dbReference>
<dbReference type="Pfam" id="PF01430">
    <property type="entry name" value="HSP33"/>
    <property type="match status" value="1"/>
</dbReference>
<dbReference type="PIRSF" id="PIRSF005261">
    <property type="entry name" value="Heat_shock_Hsp33"/>
    <property type="match status" value="1"/>
</dbReference>
<dbReference type="SUPFAM" id="SSF64397">
    <property type="entry name" value="Hsp33 domain"/>
    <property type="match status" value="1"/>
</dbReference>
<dbReference type="SUPFAM" id="SSF118352">
    <property type="entry name" value="HSP33 redox switch-like"/>
    <property type="match status" value="1"/>
</dbReference>
<organism>
    <name type="scientific">Escherichia coli (strain K12 / DH10B)</name>
    <dbReference type="NCBI Taxonomy" id="316385"/>
    <lineage>
        <taxon>Bacteria</taxon>
        <taxon>Pseudomonadati</taxon>
        <taxon>Pseudomonadota</taxon>
        <taxon>Gammaproteobacteria</taxon>
        <taxon>Enterobacterales</taxon>
        <taxon>Enterobacteriaceae</taxon>
        <taxon>Escherichia</taxon>
    </lineage>
</organism>
<reference key="1">
    <citation type="journal article" date="2008" name="J. Bacteriol.">
        <title>The complete genome sequence of Escherichia coli DH10B: insights into the biology of a laboratory workhorse.</title>
        <authorList>
            <person name="Durfee T."/>
            <person name="Nelson R."/>
            <person name="Baldwin S."/>
            <person name="Plunkett G. III"/>
            <person name="Burland V."/>
            <person name="Mau B."/>
            <person name="Petrosino J.F."/>
            <person name="Qin X."/>
            <person name="Muzny D.M."/>
            <person name="Ayele M."/>
            <person name="Gibbs R.A."/>
            <person name="Csorgo B."/>
            <person name="Posfai G."/>
            <person name="Weinstock G.M."/>
            <person name="Blattner F.R."/>
        </authorList>
    </citation>
    <scope>NUCLEOTIDE SEQUENCE [LARGE SCALE GENOMIC DNA]</scope>
    <source>
        <strain>K12 / DH10B</strain>
    </source>
</reference>
<accession>B1X748</accession>